<evidence type="ECO:0000250" key="1"/>
<evidence type="ECO:0000255" key="2"/>
<evidence type="ECO:0000305" key="3"/>
<reference key="1">
    <citation type="journal article" date="2005" name="Science">
        <title>The transcriptional landscape of the mammalian genome.</title>
        <authorList>
            <person name="Carninci P."/>
            <person name="Kasukawa T."/>
            <person name="Katayama S."/>
            <person name="Gough J."/>
            <person name="Frith M.C."/>
            <person name="Maeda N."/>
            <person name="Oyama R."/>
            <person name="Ravasi T."/>
            <person name="Lenhard B."/>
            <person name="Wells C."/>
            <person name="Kodzius R."/>
            <person name="Shimokawa K."/>
            <person name="Bajic V.B."/>
            <person name="Brenner S.E."/>
            <person name="Batalov S."/>
            <person name="Forrest A.R."/>
            <person name="Zavolan M."/>
            <person name="Davis M.J."/>
            <person name="Wilming L.G."/>
            <person name="Aidinis V."/>
            <person name="Allen J.E."/>
            <person name="Ambesi-Impiombato A."/>
            <person name="Apweiler R."/>
            <person name="Aturaliya R.N."/>
            <person name="Bailey T.L."/>
            <person name="Bansal M."/>
            <person name="Baxter L."/>
            <person name="Beisel K.W."/>
            <person name="Bersano T."/>
            <person name="Bono H."/>
            <person name="Chalk A.M."/>
            <person name="Chiu K.P."/>
            <person name="Choudhary V."/>
            <person name="Christoffels A."/>
            <person name="Clutterbuck D.R."/>
            <person name="Crowe M.L."/>
            <person name="Dalla E."/>
            <person name="Dalrymple B.P."/>
            <person name="de Bono B."/>
            <person name="Della Gatta G."/>
            <person name="di Bernardo D."/>
            <person name="Down T."/>
            <person name="Engstrom P."/>
            <person name="Fagiolini M."/>
            <person name="Faulkner G."/>
            <person name="Fletcher C.F."/>
            <person name="Fukushima T."/>
            <person name="Furuno M."/>
            <person name="Futaki S."/>
            <person name="Gariboldi M."/>
            <person name="Georgii-Hemming P."/>
            <person name="Gingeras T.R."/>
            <person name="Gojobori T."/>
            <person name="Green R.E."/>
            <person name="Gustincich S."/>
            <person name="Harbers M."/>
            <person name="Hayashi Y."/>
            <person name="Hensch T.K."/>
            <person name="Hirokawa N."/>
            <person name="Hill D."/>
            <person name="Huminiecki L."/>
            <person name="Iacono M."/>
            <person name="Ikeo K."/>
            <person name="Iwama A."/>
            <person name="Ishikawa T."/>
            <person name="Jakt M."/>
            <person name="Kanapin A."/>
            <person name="Katoh M."/>
            <person name="Kawasawa Y."/>
            <person name="Kelso J."/>
            <person name="Kitamura H."/>
            <person name="Kitano H."/>
            <person name="Kollias G."/>
            <person name="Krishnan S.P."/>
            <person name="Kruger A."/>
            <person name="Kummerfeld S.K."/>
            <person name="Kurochkin I.V."/>
            <person name="Lareau L.F."/>
            <person name="Lazarevic D."/>
            <person name="Lipovich L."/>
            <person name="Liu J."/>
            <person name="Liuni S."/>
            <person name="McWilliam S."/>
            <person name="Madan Babu M."/>
            <person name="Madera M."/>
            <person name="Marchionni L."/>
            <person name="Matsuda H."/>
            <person name="Matsuzawa S."/>
            <person name="Miki H."/>
            <person name="Mignone F."/>
            <person name="Miyake S."/>
            <person name="Morris K."/>
            <person name="Mottagui-Tabar S."/>
            <person name="Mulder N."/>
            <person name="Nakano N."/>
            <person name="Nakauchi H."/>
            <person name="Ng P."/>
            <person name="Nilsson R."/>
            <person name="Nishiguchi S."/>
            <person name="Nishikawa S."/>
            <person name="Nori F."/>
            <person name="Ohara O."/>
            <person name="Okazaki Y."/>
            <person name="Orlando V."/>
            <person name="Pang K.C."/>
            <person name="Pavan W.J."/>
            <person name="Pavesi G."/>
            <person name="Pesole G."/>
            <person name="Petrovsky N."/>
            <person name="Piazza S."/>
            <person name="Reed J."/>
            <person name="Reid J.F."/>
            <person name="Ring B.Z."/>
            <person name="Ringwald M."/>
            <person name="Rost B."/>
            <person name="Ruan Y."/>
            <person name="Salzberg S.L."/>
            <person name="Sandelin A."/>
            <person name="Schneider C."/>
            <person name="Schoenbach C."/>
            <person name="Sekiguchi K."/>
            <person name="Semple C.A."/>
            <person name="Seno S."/>
            <person name="Sessa L."/>
            <person name="Sheng Y."/>
            <person name="Shibata Y."/>
            <person name="Shimada H."/>
            <person name="Shimada K."/>
            <person name="Silva D."/>
            <person name="Sinclair B."/>
            <person name="Sperling S."/>
            <person name="Stupka E."/>
            <person name="Sugiura K."/>
            <person name="Sultana R."/>
            <person name="Takenaka Y."/>
            <person name="Taki K."/>
            <person name="Tammoja K."/>
            <person name="Tan S.L."/>
            <person name="Tang S."/>
            <person name="Taylor M.S."/>
            <person name="Tegner J."/>
            <person name="Teichmann S.A."/>
            <person name="Ueda H.R."/>
            <person name="van Nimwegen E."/>
            <person name="Verardo R."/>
            <person name="Wei C.L."/>
            <person name="Yagi K."/>
            <person name="Yamanishi H."/>
            <person name="Zabarovsky E."/>
            <person name="Zhu S."/>
            <person name="Zimmer A."/>
            <person name="Hide W."/>
            <person name="Bult C."/>
            <person name="Grimmond S.M."/>
            <person name="Teasdale R.D."/>
            <person name="Liu E.T."/>
            <person name="Brusic V."/>
            <person name="Quackenbush J."/>
            <person name="Wahlestedt C."/>
            <person name="Mattick J.S."/>
            <person name="Hume D.A."/>
            <person name="Kai C."/>
            <person name="Sasaki D."/>
            <person name="Tomaru Y."/>
            <person name="Fukuda S."/>
            <person name="Kanamori-Katayama M."/>
            <person name="Suzuki M."/>
            <person name="Aoki J."/>
            <person name="Arakawa T."/>
            <person name="Iida J."/>
            <person name="Imamura K."/>
            <person name="Itoh M."/>
            <person name="Kato T."/>
            <person name="Kawaji H."/>
            <person name="Kawagashira N."/>
            <person name="Kawashima T."/>
            <person name="Kojima M."/>
            <person name="Kondo S."/>
            <person name="Konno H."/>
            <person name="Nakano K."/>
            <person name="Ninomiya N."/>
            <person name="Nishio T."/>
            <person name="Okada M."/>
            <person name="Plessy C."/>
            <person name="Shibata K."/>
            <person name="Shiraki T."/>
            <person name="Suzuki S."/>
            <person name="Tagami M."/>
            <person name="Waki K."/>
            <person name="Watahiki A."/>
            <person name="Okamura-Oho Y."/>
            <person name="Suzuki H."/>
            <person name="Kawai J."/>
            <person name="Hayashizaki Y."/>
        </authorList>
    </citation>
    <scope>NUCLEOTIDE SEQUENCE [LARGE SCALE MRNA]</scope>
    <source>
        <strain>C57BL/6J</strain>
        <tissue>Kidney</tissue>
    </source>
</reference>
<reference key="2">
    <citation type="journal article" date="2004" name="Genome Res.">
        <title>The status, quality, and expansion of the NIH full-length cDNA project: the Mammalian Gene Collection (MGC).</title>
        <authorList>
            <consortium name="The MGC Project Team"/>
        </authorList>
    </citation>
    <scope>NUCLEOTIDE SEQUENCE [LARGE SCALE MRNA]</scope>
    <source>
        <tissue>Olfactory epithelium</tissue>
    </source>
</reference>
<reference key="3">
    <citation type="journal article" date="2010" name="Cell">
        <title>A tissue-specific atlas of mouse protein phosphorylation and expression.</title>
        <authorList>
            <person name="Huttlin E.L."/>
            <person name="Jedrychowski M.P."/>
            <person name="Elias J.E."/>
            <person name="Goswami T."/>
            <person name="Rad R."/>
            <person name="Beausoleil S.A."/>
            <person name="Villen J."/>
            <person name="Haas W."/>
            <person name="Sowa M.E."/>
            <person name="Gygi S.P."/>
        </authorList>
    </citation>
    <scope>IDENTIFICATION BY MASS SPECTROMETRY [LARGE SCALE ANALYSIS]</scope>
    <source>
        <tissue>Kidney</tissue>
        <tissue>Liver</tissue>
        <tissue>Lung</tissue>
    </source>
</reference>
<comment type="subunit">
    <text evidence="1">Forms a complex with integrins.</text>
</comment>
<comment type="subcellular location">
    <subcellularLocation>
        <location>Membrane</location>
        <topology>Multi-pass membrane protein</topology>
    </subcellularLocation>
</comment>
<comment type="similarity">
    <text evidence="3">Belongs to the tetraspanin (TM4SF) family.</text>
</comment>
<gene>
    <name type="primary">Tspan4</name>
    <name type="synonym">Tm4sf7</name>
</gene>
<proteinExistence type="evidence at protein level"/>
<keyword id="KW-0325">Glycoprotein</keyword>
<keyword id="KW-0472">Membrane</keyword>
<keyword id="KW-1185">Reference proteome</keyword>
<keyword id="KW-0812">Transmembrane</keyword>
<keyword id="KW-1133">Transmembrane helix</keyword>
<name>TSN4_MOUSE</name>
<organism>
    <name type="scientific">Mus musculus</name>
    <name type="common">Mouse</name>
    <dbReference type="NCBI Taxonomy" id="10090"/>
    <lineage>
        <taxon>Eukaryota</taxon>
        <taxon>Metazoa</taxon>
        <taxon>Chordata</taxon>
        <taxon>Craniata</taxon>
        <taxon>Vertebrata</taxon>
        <taxon>Euteleostomi</taxon>
        <taxon>Mammalia</taxon>
        <taxon>Eutheria</taxon>
        <taxon>Euarchontoglires</taxon>
        <taxon>Glires</taxon>
        <taxon>Rodentia</taxon>
        <taxon>Myomorpha</taxon>
        <taxon>Muroidea</taxon>
        <taxon>Muridae</taxon>
        <taxon>Murinae</taxon>
        <taxon>Mus</taxon>
        <taxon>Mus</taxon>
    </lineage>
</organism>
<protein>
    <recommendedName>
        <fullName>Tetraspanin-4</fullName>
        <shortName>Tspan-4</shortName>
    </recommendedName>
    <alternativeName>
        <fullName>Transmembrane 4 superfamily member 7</fullName>
    </alternativeName>
</protein>
<dbReference type="EMBL" id="AK002709">
    <property type="protein sequence ID" value="BAB22301.1"/>
    <property type="molecule type" value="mRNA"/>
</dbReference>
<dbReference type="EMBL" id="BC003482">
    <property type="protein sequence ID" value="AAH03482.1"/>
    <property type="molecule type" value="mRNA"/>
</dbReference>
<dbReference type="EMBL" id="BC083070">
    <property type="protein sequence ID" value="AAH83070.1"/>
    <property type="molecule type" value="mRNA"/>
</dbReference>
<dbReference type="CCDS" id="CCDS22018.1"/>
<dbReference type="RefSeq" id="NP_001239517.1">
    <property type="nucleotide sequence ID" value="NM_001252588.2"/>
</dbReference>
<dbReference type="RefSeq" id="NP_001390284.1">
    <property type="nucleotide sequence ID" value="NM_001403355.1"/>
</dbReference>
<dbReference type="RefSeq" id="NP_001390285.1">
    <property type="nucleotide sequence ID" value="NM_001403356.1"/>
</dbReference>
<dbReference type="RefSeq" id="NP_001390286.1">
    <property type="nucleotide sequence ID" value="NM_001403357.1"/>
</dbReference>
<dbReference type="RefSeq" id="NP_444312.1">
    <property type="nucleotide sequence ID" value="NM_053082.4"/>
</dbReference>
<dbReference type="SMR" id="Q9DCK3"/>
<dbReference type="FunCoup" id="Q9DCK3">
    <property type="interactions" value="239"/>
</dbReference>
<dbReference type="IntAct" id="Q9DCK3">
    <property type="interactions" value="1"/>
</dbReference>
<dbReference type="MINT" id="Q9DCK3"/>
<dbReference type="STRING" id="10090.ENSMUSP00000026585"/>
<dbReference type="GlyCosmos" id="Q9DCK3">
    <property type="glycosylation" value="2 sites, No reported glycans"/>
</dbReference>
<dbReference type="GlyGen" id="Q9DCK3">
    <property type="glycosylation" value="2 sites"/>
</dbReference>
<dbReference type="PhosphoSitePlus" id="Q9DCK3"/>
<dbReference type="SwissPalm" id="Q9DCK3"/>
<dbReference type="jPOST" id="Q9DCK3"/>
<dbReference type="PaxDb" id="10090-ENSMUSP00000026585"/>
<dbReference type="ProteomicsDB" id="297724"/>
<dbReference type="Antibodypedia" id="10103">
    <property type="antibodies" value="71 antibodies from 19 providers"/>
</dbReference>
<dbReference type="DNASU" id="64540"/>
<dbReference type="Ensembl" id="ENSMUST00000026585.14">
    <property type="protein sequence ID" value="ENSMUSP00000026585.8"/>
    <property type="gene ID" value="ENSMUSG00000025511.16"/>
</dbReference>
<dbReference type="Ensembl" id="ENSMUST00000117634.2">
    <property type="protein sequence ID" value="ENSMUSP00000113085.2"/>
    <property type="gene ID" value="ENSMUSG00000025511.16"/>
</dbReference>
<dbReference type="GeneID" id="64540"/>
<dbReference type="KEGG" id="mmu:64540"/>
<dbReference type="UCSC" id="uc009kln.2">
    <property type="organism name" value="mouse"/>
</dbReference>
<dbReference type="AGR" id="MGI:1928097"/>
<dbReference type="CTD" id="7106"/>
<dbReference type="MGI" id="MGI:1928097">
    <property type="gene designation" value="Tspan4"/>
</dbReference>
<dbReference type="VEuPathDB" id="HostDB:ENSMUSG00000025511"/>
<dbReference type="eggNOG" id="KOG3882">
    <property type="taxonomic scope" value="Eukaryota"/>
</dbReference>
<dbReference type="GeneTree" id="ENSGT00940000160434"/>
<dbReference type="HOGENOM" id="CLU_055524_4_3_1"/>
<dbReference type="InParanoid" id="Q9DCK3"/>
<dbReference type="OMA" id="KADTYCT"/>
<dbReference type="PhylomeDB" id="Q9DCK3"/>
<dbReference type="TreeFam" id="TF352892"/>
<dbReference type="BioGRID-ORCS" id="64540">
    <property type="hits" value="1 hit in 78 CRISPR screens"/>
</dbReference>
<dbReference type="ChiTaRS" id="Tspan4">
    <property type="organism name" value="mouse"/>
</dbReference>
<dbReference type="PRO" id="PR:Q9DCK3"/>
<dbReference type="Proteomes" id="UP000000589">
    <property type="component" value="Chromosome 7"/>
</dbReference>
<dbReference type="RNAct" id="Q9DCK3">
    <property type="molecule type" value="protein"/>
</dbReference>
<dbReference type="Bgee" id="ENSMUSG00000025511">
    <property type="expression patterns" value="Expressed in stroma of bone marrow and 260 other cell types or tissues"/>
</dbReference>
<dbReference type="ExpressionAtlas" id="Q9DCK3">
    <property type="expression patterns" value="baseline and differential"/>
</dbReference>
<dbReference type="GO" id="GO:0016020">
    <property type="term" value="C:membrane"/>
    <property type="evidence" value="ECO:0007669"/>
    <property type="project" value="UniProtKB-SubCell"/>
</dbReference>
<dbReference type="GO" id="GO:0140494">
    <property type="term" value="C:migrasome"/>
    <property type="evidence" value="ECO:0000314"/>
    <property type="project" value="MGI"/>
</dbReference>
<dbReference type="GO" id="GO:0160040">
    <property type="term" value="P:mitocytosis"/>
    <property type="evidence" value="ECO:0000314"/>
    <property type="project" value="MGI"/>
</dbReference>
<dbReference type="GO" id="GO:0051881">
    <property type="term" value="P:regulation of mitochondrial membrane potential"/>
    <property type="evidence" value="ECO:0000314"/>
    <property type="project" value="MGI"/>
</dbReference>
<dbReference type="CDD" id="cd03165">
    <property type="entry name" value="NET-5_like_LEL"/>
    <property type="match status" value="1"/>
</dbReference>
<dbReference type="FunFam" id="1.10.1450.10:FF:000006">
    <property type="entry name" value="Tetraspanin"/>
    <property type="match status" value="1"/>
</dbReference>
<dbReference type="Gene3D" id="1.10.1450.10">
    <property type="entry name" value="Tetraspanin"/>
    <property type="match status" value="1"/>
</dbReference>
<dbReference type="InterPro" id="IPR018499">
    <property type="entry name" value="Tetraspanin/Peripherin"/>
</dbReference>
<dbReference type="InterPro" id="IPR000301">
    <property type="entry name" value="Tetraspanin_animals"/>
</dbReference>
<dbReference type="InterPro" id="IPR018503">
    <property type="entry name" value="Tetraspanin_CS"/>
</dbReference>
<dbReference type="InterPro" id="IPR008952">
    <property type="entry name" value="Tetraspanin_EC2_sf"/>
</dbReference>
<dbReference type="PANTHER" id="PTHR19282">
    <property type="entry name" value="TETRASPANIN"/>
    <property type="match status" value="1"/>
</dbReference>
<dbReference type="PANTHER" id="PTHR19282:SF40">
    <property type="entry name" value="TETRASPANIN-4"/>
    <property type="match status" value="1"/>
</dbReference>
<dbReference type="Pfam" id="PF00335">
    <property type="entry name" value="Tetraspanin"/>
    <property type="match status" value="1"/>
</dbReference>
<dbReference type="PIRSF" id="PIRSF002419">
    <property type="entry name" value="Tetraspanin"/>
    <property type="match status" value="1"/>
</dbReference>
<dbReference type="PRINTS" id="PR00259">
    <property type="entry name" value="TMFOUR"/>
</dbReference>
<dbReference type="SUPFAM" id="SSF48652">
    <property type="entry name" value="Tetraspanin"/>
    <property type="match status" value="1"/>
</dbReference>
<dbReference type="PROSITE" id="PS00421">
    <property type="entry name" value="TM4_1"/>
    <property type="match status" value="1"/>
</dbReference>
<accession>Q9DCK3</accession>
<sequence>MARGCLQGVKYLMFAFNLLFWLGGCGVLGVGIWLAATQGNFATLSSSFPSLSAANLLIVTGTFVMAIGFVGCIGALKENKCLLLTFFVLLLLVFLLEATIAVLFFAYSDKIDSYAQQDLKKGLHLYGTQGNVGLTNAWSIIQTDFRCCGVSNYTDWFEVYNATRVPDSCCLEFSDSCGLHEPGTWWKSPCYETVKAWLQENLLAVGIFGLCTALVQILGLTFAMTMYCQVVKADTYCA</sequence>
<feature type="chain" id="PRO_0000219242" description="Tetraspanin-4">
    <location>
        <begin position="1"/>
        <end position="238"/>
    </location>
</feature>
<feature type="topological domain" description="Cytoplasmic" evidence="2">
    <location>
        <begin position="1"/>
        <end position="13"/>
    </location>
</feature>
<feature type="transmembrane region" description="Helical" evidence="2">
    <location>
        <begin position="14"/>
        <end position="34"/>
    </location>
</feature>
<feature type="topological domain" description="Extracellular" evidence="2">
    <location>
        <begin position="35"/>
        <end position="55"/>
    </location>
</feature>
<feature type="transmembrane region" description="Helical" evidence="2">
    <location>
        <begin position="56"/>
        <end position="76"/>
    </location>
</feature>
<feature type="topological domain" description="Cytoplasmic" evidence="2">
    <location>
        <begin position="77"/>
        <end position="85"/>
    </location>
</feature>
<feature type="transmembrane region" description="Helical" evidence="2">
    <location>
        <begin position="86"/>
        <end position="106"/>
    </location>
</feature>
<feature type="topological domain" description="Extracellular" evidence="2">
    <location>
        <begin position="107"/>
        <end position="201"/>
    </location>
</feature>
<feature type="transmembrane region" description="Helical" evidence="2">
    <location>
        <begin position="202"/>
        <end position="222"/>
    </location>
</feature>
<feature type="topological domain" description="Cytoplasmic" evidence="2">
    <location>
        <begin position="223"/>
        <end position="238"/>
    </location>
</feature>
<feature type="glycosylation site" description="N-linked (GlcNAc...) asparagine" evidence="2">
    <location>
        <position position="152"/>
    </location>
</feature>
<feature type="glycosylation site" description="N-linked (GlcNAc...) asparagine" evidence="2">
    <location>
        <position position="161"/>
    </location>
</feature>